<feature type="chain" id="PRO_0000131558" description="Small ribosomal subunit protein uS5">
    <location>
        <begin position="1"/>
        <end position="172"/>
    </location>
</feature>
<feature type="domain" description="S5 DRBM" evidence="1">
    <location>
        <begin position="13"/>
        <end position="76"/>
    </location>
</feature>
<organism>
    <name type="scientific">Neisseria gonorrhoeae (strain ATCC 700825 / FA 1090)</name>
    <dbReference type="NCBI Taxonomy" id="242231"/>
    <lineage>
        <taxon>Bacteria</taxon>
        <taxon>Pseudomonadati</taxon>
        <taxon>Pseudomonadota</taxon>
        <taxon>Betaproteobacteria</taxon>
        <taxon>Neisseriales</taxon>
        <taxon>Neisseriaceae</taxon>
        <taxon>Neisseria</taxon>
    </lineage>
</organism>
<proteinExistence type="inferred from homology"/>
<sequence>MAKHEIEERGDGLIEKMVAVNRVTKVVKGGRIMAFSALTVVGDGDGRIGMGKGKSKEVPVAVQKAMDQARRSMIKVPLKNGTIHHEVIGRHGATKVFMQPAKEGSGVKAGGPMRLVFDAMGIHNISAKVHGSTNPYNIVRATLDGLSKLHTPADIAAKRGLTVEDILGVNHG</sequence>
<protein>
    <recommendedName>
        <fullName evidence="1">Small ribosomal subunit protein uS5</fullName>
    </recommendedName>
    <alternativeName>
        <fullName evidence="2">30S ribosomal protein S5</fullName>
    </alternativeName>
</protein>
<name>RS5_NEIG1</name>
<dbReference type="EMBL" id="AE004969">
    <property type="protein sequence ID" value="AAW90443.1"/>
    <property type="molecule type" value="Genomic_DNA"/>
</dbReference>
<dbReference type="RefSeq" id="WP_002215445.1">
    <property type="nucleotide sequence ID" value="NC_002946.2"/>
</dbReference>
<dbReference type="RefSeq" id="YP_208855.1">
    <property type="nucleotide sequence ID" value="NC_002946.2"/>
</dbReference>
<dbReference type="SMR" id="Q5F5U4"/>
<dbReference type="STRING" id="242231.NGO_1824"/>
<dbReference type="GeneID" id="93387234"/>
<dbReference type="KEGG" id="ngo:NGO_1824"/>
<dbReference type="PATRIC" id="fig|242231.10.peg.2192"/>
<dbReference type="HOGENOM" id="CLU_065898_2_2_4"/>
<dbReference type="Proteomes" id="UP000000535">
    <property type="component" value="Chromosome"/>
</dbReference>
<dbReference type="GO" id="GO:0015935">
    <property type="term" value="C:small ribosomal subunit"/>
    <property type="evidence" value="ECO:0007669"/>
    <property type="project" value="InterPro"/>
</dbReference>
<dbReference type="GO" id="GO:0019843">
    <property type="term" value="F:rRNA binding"/>
    <property type="evidence" value="ECO:0007669"/>
    <property type="project" value="UniProtKB-UniRule"/>
</dbReference>
<dbReference type="GO" id="GO:0003735">
    <property type="term" value="F:structural constituent of ribosome"/>
    <property type="evidence" value="ECO:0007669"/>
    <property type="project" value="InterPro"/>
</dbReference>
<dbReference type="GO" id="GO:0006412">
    <property type="term" value="P:translation"/>
    <property type="evidence" value="ECO:0007669"/>
    <property type="project" value="UniProtKB-UniRule"/>
</dbReference>
<dbReference type="FunFam" id="3.30.160.20:FF:000001">
    <property type="entry name" value="30S ribosomal protein S5"/>
    <property type="match status" value="1"/>
</dbReference>
<dbReference type="FunFam" id="3.30.230.10:FF:000002">
    <property type="entry name" value="30S ribosomal protein S5"/>
    <property type="match status" value="1"/>
</dbReference>
<dbReference type="Gene3D" id="3.30.160.20">
    <property type="match status" value="1"/>
</dbReference>
<dbReference type="Gene3D" id="3.30.230.10">
    <property type="match status" value="1"/>
</dbReference>
<dbReference type="HAMAP" id="MF_01307_B">
    <property type="entry name" value="Ribosomal_uS5_B"/>
    <property type="match status" value="1"/>
</dbReference>
<dbReference type="InterPro" id="IPR020568">
    <property type="entry name" value="Ribosomal_Su5_D2-typ_SF"/>
</dbReference>
<dbReference type="InterPro" id="IPR000851">
    <property type="entry name" value="Ribosomal_uS5"/>
</dbReference>
<dbReference type="InterPro" id="IPR005712">
    <property type="entry name" value="Ribosomal_uS5_bac-type"/>
</dbReference>
<dbReference type="InterPro" id="IPR005324">
    <property type="entry name" value="Ribosomal_uS5_C"/>
</dbReference>
<dbReference type="InterPro" id="IPR013810">
    <property type="entry name" value="Ribosomal_uS5_N"/>
</dbReference>
<dbReference type="InterPro" id="IPR018192">
    <property type="entry name" value="Ribosomal_uS5_N_CS"/>
</dbReference>
<dbReference type="InterPro" id="IPR014721">
    <property type="entry name" value="Ribsml_uS5_D2-typ_fold_subgr"/>
</dbReference>
<dbReference type="NCBIfam" id="TIGR01021">
    <property type="entry name" value="rpsE_bact"/>
    <property type="match status" value="1"/>
</dbReference>
<dbReference type="PANTHER" id="PTHR48277">
    <property type="entry name" value="MITOCHONDRIAL RIBOSOMAL PROTEIN S5"/>
    <property type="match status" value="1"/>
</dbReference>
<dbReference type="PANTHER" id="PTHR48277:SF1">
    <property type="entry name" value="MITOCHONDRIAL RIBOSOMAL PROTEIN S5"/>
    <property type="match status" value="1"/>
</dbReference>
<dbReference type="Pfam" id="PF00333">
    <property type="entry name" value="Ribosomal_S5"/>
    <property type="match status" value="1"/>
</dbReference>
<dbReference type="Pfam" id="PF03719">
    <property type="entry name" value="Ribosomal_S5_C"/>
    <property type="match status" value="1"/>
</dbReference>
<dbReference type="SUPFAM" id="SSF54768">
    <property type="entry name" value="dsRNA-binding domain-like"/>
    <property type="match status" value="1"/>
</dbReference>
<dbReference type="SUPFAM" id="SSF54211">
    <property type="entry name" value="Ribosomal protein S5 domain 2-like"/>
    <property type="match status" value="1"/>
</dbReference>
<dbReference type="PROSITE" id="PS00585">
    <property type="entry name" value="RIBOSOMAL_S5"/>
    <property type="match status" value="1"/>
</dbReference>
<dbReference type="PROSITE" id="PS50881">
    <property type="entry name" value="S5_DSRBD"/>
    <property type="match status" value="1"/>
</dbReference>
<reference key="1">
    <citation type="submission" date="2003-03" db="EMBL/GenBank/DDBJ databases">
        <title>The complete genome sequence of Neisseria gonorrhoeae.</title>
        <authorList>
            <person name="Lewis L.A."/>
            <person name="Gillaspy A.F."/>
            <person name="McLaughlin R.E."/>
            <person name="Gipson M."/>
            <person name="Ducey T.F."/>
            <person name="Ownbey T."/>
            <person name="Hartman K."/>
            <person name="Nydick C."/>
            <person name="Carson M.B."/>
            <person name="Vaughn J."/>
            <person name="Thomson C."/>
            <person name="Song L."/>
            <person name="Lin S."/>
            <person name="Yuan X."/>
            <person name="Najar F."/>
            <person name="Zhan M."/>
            <person name="Ren Q."/>
            <person name="Zhu H."/>
            <person name="Qi S."/>
            <person name="Kenton S.M."/>
            <person name="Lai H."/>
            <person name="White J.D."/>
            <person name="Clifton S."/>
            <person name="Roe B.A."/>
            <person name="Dyer D.W."/>
        </authorList>
    </citation>
    <scope>NUCLEOTIDE SEQUENCE [LARGE SCALE GENOMIC DNA]</scope>
    <source>
        <strain>ATCC 700825 / FA 1090</strain>
    </source>
</reference>
<comment type="function">
    <text evidence="1">With S4 and S12 plays an important role in translational accuracy.</text>
</comment>
<comment type="function">
    <text evidence="1">Located at the back of the 30S subunit body where it stabilizes the conformation of the head with respect to the body.</text>
</comment>
<comment type="subunit">
    <text evidence="1">Part of the 30S ribosomal subunit. Contacts proteins S4 and S8.</text>
</comment>
<comment type="domain">
    <text>The N-terminal domain interacts with the head of the 30S subunit; the C-terminal domain interacts with the body and contacts protein S4. The interaction surface between S4 and S5 is involved in control of translational fidelity.</text>
</comment>
<comment type="similarity">
    <text evidence="1">Belongs to the universal ribosomal protein uS5 family.</text>
</comment>
<accession>Q5F5U4</accession>
<evidence type="ECO:0000255" key="1">
    <source>
        <dbReference type="HAMAP-Rule" id="MF_01307"/>
    </source>
</evidence>
<evidence type="ECO:0000305" key="2"/>
<keyword id="KW-1185">Reference proteome</keyword>
<keyword id="KW-0687">Ribonucleoprotein</keyword>
<keyword id="KW-0689">Ribosomal protein</keyword>
<keyword id="KW-0694">RNA-binding</keyword>
<keyword id="KW-0699">rRNA-binding</keyword>
<gene>
    <name evidence="1" type="primary">rpsE</name>
    <name type="ordered locus">NGO_1824</name>
</gene>